<feature type="chain" id="PRO_0000193374" description="Ubiquinone biosynthesis O-methyltransferase">
    <location>
        <begin position="1"/>
        <end position="232"/>
    </location>
</feature>
<feature type="binding site" evidence="1">
    <location>
        <position position="36"/>
    </location>
    <ligand>
        <name>S-adenosyl-L-methionine</name>
        <dbReference type="ChEBI" id="CHEBI:59789"/>
    </ligand>
</feature>
<feature type="binding site" evidence="1">
    <location>
        <position position="55"/>
    </location>
    <ligand>
        <name>S-adenosyl-L-methionine</name>
        <dbReference type="ChEBI" id="CHEBI:59789"/>
    </ligand>
</feature>
<feature type="binding site" evidence="1">
    <location>
        <position position="76"/>
    </location>
    <ligand>
        <name>S-adenosyl-L-methionine</name>
        <dbReference type="ChEBI" id="CHEBI:59789"/>
    </ligand>
</feature>
<feature type="binding site" evidence="1">
    <location>
        <position position="120"/>
    </location>
    <ligand>
        <name>S-adenosyl-L-methionine</name>
        <dbReference type="ChEBI" id="CHEBI:59789"/>
    </ligand>
</feature>
<comment type="function">
    <text evidence="1">O-methyltransferase that catalyzes the 2 O-methylation steps in the ubiquinone biosynthetic pathway.</text>
</comment>
<comment type="catalytic activity">
    <reaction evidence="1">
        <text>a 3-demethylubiquinol + S-adenosyl-L-methionine = a ubiquinol + S-adenosyl-L-homocysteine + H(+)</text>
        <dbReference type="Rhea" id="RHEA:44380"/>
        <dbReference type="Rhea" id="RHEA-COMP:9566"/>
        <dbReference type="Rhea" id="RHEA-COMP:10914"/>
        <dbReference type="ChEBI" id="CHEBI:15378"/>
        <dbReference type="ChEBI" id="CHEBI:17976"/>
        <dbReference type="ChEBI" id="CHEBI:57856"/>
        <dbReference type="ChEBI" id="CHEBI:59789"/>
        <dbReference type="ChEBI" id="CHEBI:84422"/>
        <dbReference type="EC" id="2.1.1.64"/>
    </reaction>
</comment>
<comment type="catalytic activity">
    <reaction evidence="1">
        <text>a 3-(all-trans-polyprenyl)benzene-1,2-diol + S-adenosyl-L-methionine = a 2-methoxy-6-(all-trans-polyprenyl)phenol + S-adenosyl-L-homocysteine + H(+)</text>
        <dbReference type="Rhea" id="RHEA:31411"/>
        <dbReference type="Rhea" id="RHEA-COMP:9550"/>
        <dbReference type="Rhea" id="RHEA-COMP:9551"/>
        <dbReference type="ChEBI" id="CHEBI:15378"/>
        <dbReference type="ChEBI" id="CHEBI:57856"/>
        <dbReference type="ChEBI" id="CHEBI:59789"/>
        <dbReference type="ChEBI" id="CHEBI:62729"/>
        <dbReference type="ChEBI" id="CHEBI:62731"/>
        <dbReference type="EC" id="2.1.1.222"/>
    </reaction>
</comment>
<comment type="pathway">
    <text evidence="1">Cofactor biosynthesis; ubiquinone biosynthesis.</text>
</comment>
<comment type="similarity">
    <text evidence="1">Belongs to the methyltransferase superfamily. UbiG/COQ3 family.</text>
</comment>
<keyword id="KW-0489">Methyltransferase</keyword>
<keyword id="KW-1185">Reference proteome</keyword>
<keyword id="KW-0949">S-adenosyl-L-methionine</keyword>
<keyword id="KW-0808">Transferase</keyword>
<keyword id="KW-0831">Ubiquinone biosynthesis</keyword>
<protein>
    <recommendedName>
        <fullName evidence="1">Ubiquinone biosynthesis O-methyltransferase</fullName>
    </recommendedName>
    <alternativeName>
        <fullName evidence="1">2-polyprenyl-6-hydroxyphenol methylase</fullName>
        <ecNumber evidence="1">2.1.1.222</ecNumber>
    </alternativeName>
    <alternativeName>
        <fullName evidence="1">3-demethylubiquinone 3-O-methyltransferase</fullName>
        <ecNumber evidence="1">2.1.1.64</ecNumber>
    </alternativeName>
</protein>
<evidence type="ECO:0000255" key="1">
    <source>
        <dbReference type="HAMAP-Rule" id="MF_00472"/>
    </source>
</evidence>
<gene>
    <name evidence="1" type="primary">ubiG</name>
    <name type="ordered locus">BMA0437</name>
</gene>
<organism>
    <name type="scientific">Burkholderia mallei (strain ATCC 23344)</name>
    <dbReference type="NCBI Taxonomy" id="243160"/>
    <lineage>
        <taxon>Bacteria</taxon>
        <taxon>Pseudomonadati</taxon>
        <taxon>Pseudomonadota</taxon>
        <taxon>Betaproteobacteria</taxon>
        <taxon>Burkholderiales</taxon>
        <taxon>Burkholderiaceae</taxon>
        <taxon>Burkholderia</taxon>
        <taxon>pseudomallei group</taxon>
    </lineage>
</organism>
<dbReference type="EC" id="2.1.1.222" evidence="1"/>
<dbReference type="EC" id="2.1.1.64" evidence="1"/>
<dbReference type="EMBL" id="CP000010">
    <property type="protein sequence ID" value="AAU48812.1"/>
    <property type="molecule type" value="Genomic_DNA"/>
</dbReference>
<dbReference type="RefSeq" id="WP_004532296.1">
    <property type="nucleotide sequence ID" value="NC_006348.1"/>
</dbReference>
<dbReference type="RefSeq" id="YP_102250.1">
    <property type="nucleotide sequence ID" value="NC_006348.1"/>
</dbReference>
<dbReference type="SMR" id="Q62M18"/>
<dbReference type="GeneID" id="93061109"/>
<dbReference type="KEGG" id="bma:BMA0437"/>
<dbReference type="PATRIC" id="fig|243160.12.peg.444"/>
<dbReference type="eggNOG" id="COG2227">
    <property type="taxonomic scope" value="Bacteria"/>
</dbReference>
<dbReference type="HOGENOM" id="CLU_042432_5_0_4"/>
<dbReference type="UniPathway" id="UPA00232"/>
<dbReference type="Proteomes" id="UP000006693">
    <property type="component" value="Chromosome 1"/>
</dbReference>
<dbReference type="GO" id="GO:0102208">
    <property type="term" value="F:2-polyprenyl-6-hydroxyphenol methylase activity"/>
    <property type="evidence" value="ECO:0007669"/>
    <property type="project" value="UniProtKB-EC"/>
</dbReference>
<dbReference type="GO" id="GO:0061542">
    <property type="term" value="F:3-demethylubiquinol 3-O-methyltransferase activity"/>
    <property type="evidence" value="ECO:0007669"/>
    <property type="project" value="UniProtKB-UniRule"/>
</dbReference>
<dbReference type="GO" id="GO:0010420">
    <property type="term" value="F:polyprenyldihydroxybenzoate methyltransferase activity"/>
    <property type="evidence" value="ECO:0007669"/>
    <property type="project" value="InterPro"/>
</dbReference>
<dbReference type="GO" id="GO:0032259">
    <property type="term" value="P:methylation"/>
    <property type="evidence" value="ECO:0007669"/>
    <property type="project" value="UniProtKB-KW"/>
</dbReference>
<dbReference type="CDD" id="cd02440">
    <property type="entry name" value="AdoMet_MTases"/>
    <property type="match status" value="1"/>
</dbReference>
<dbReference type="FunFam" id="3.40.50.150:FF:000028">
    <property type="entry name" value="Ubiquinone biosynthesis O-methyltransferase"/>
    <property type="match status" value="1"/>
</dbReference>
<dbReference type="Gene3D" id="3.40.50.150">
    <property type="entry name" value="Vaccinia Virus protein VP39"/>
    <property type="match status" value="1"/>
</dbReference>
<dbReference type="HAMAP" id="MF_00472">
    <property type="entry name" value="UbiG"/>
    <property type="match status" value="1"/>
</dbReference>
<dbReference type="InterPro" id="IPR029063">
    <property type="entry name" value="SAM-dependent_MTases_sf"/>
</dbReference>
<dbReference type="InterPro" id="IPR010233">
    <property type="entry name" value="UbiG_MeTrfase"/>
</dbReference>
<dbReference type="NCBIfam" id="TIGR01983">
    <property type="entry name" value="UbiG"/>
    <property type="match status" value="1"/>
</dbReference>
<dbReference type="PANTHER" id="PTHR43464">
    <property type="entry name" value="METHYLTRANSFERASE"/>
    <property type="match status" value="1"/>
</dbReference>
<dbReference type="PANTHER" id="PTHR43464:SF19">
    <property type="entry name" value="UBIQUINONE BIOSYNTHESIS O-METHYLTRANSFERASE, MITOCHONDRIAL"/>
    <property type="match status" value="1"/>
</dbReference>
<dbReference type="Pfam" id="PF13489">
    <property type="entry name" value="Methyltransf_23"/>
    <property type="match status" value="1"/>
</dbReference>
<dbReference type="SUPFAM" id="SSF53335">
    <property type="entry name" value="S-adenosyl-L-methionine-dependent methyltransferases"/>
    <property type="match status" value="1"/>
</dbReference>
<proteinExistence type="inferred from homology"/>
<name>UBIG_BURMA</name>
<reference key="1">
    <citation type="journal article" date="2004" name="Proc. Natl. Acad. Sci. U.S.A.">
        <title>Structural flexibility in the Burkholderia mallei genome.</title>
        <authorList>
            <person name="Nierman W.C."/>
            <person name="DeShazer D."/>
            <person name="Kim H.S."/>
            <person name="Tettelin H."/>
            <person name="Nelson K.E."/>
            <person name="Feldblyum T.V."/>
            <person name="Ulrich R.L."/>
            <person name="Ronning C.M."/>
            <person name="Brinkac L.M."/>
            <person name="Daugherty S.C."/>
            <person name="Davidsen T.D."/>
            <person name="DeBoy R.T."/>
            <person name="Dimitrov G."/>
            <person name="Dodson R.J."/>
            <person name="Durkin A.S."/>
            <person name="Gwinn M.L."/>
            <person name="Haft D.H."/>
            <person name="Khouri H.M."/>
            <person name="Kolonay J.F."/>
            <person name="Madupu R."/>
            <person name="Mohammoud Y."/>
            <person name="Nelson W.C."/>
            <person name="Radune D."/>
            <person name="Romero C.M."/>
            <person name="Sarria S."/>
            <person name="Selengut J."/>
            <person name="Shamblin C."/>
            <person name="Sullivan S.A."/>
            <person name="White O."/>
            <person name="Yu Y."/>
            <person name="Zafar N."/>
            <person name="Zhou L."/>
            <person name="Fraser C.M."/>
        </authorList>
    </citation>
    <scope>NUCLEOTIDE SEQUENCE [LARGE SCALE GENOMIC DNA]</scope>
    <source>
        <strain>ATCC 23344</strain>
    </source>
</reference>
<sequence>MTNADPHELQKFSDLAHKWWDPNAEFKPLHDLNPVRLSWIDAHAHLPGKRVVDIGCGGGILSESMASLGAQVKGIDLATEALGVADLHSLESGVSVDYEAIAAEALAAREPGAYDVVTCMEMLEHVPSPANIVAACATLVKPGGWVFFSTLNRNLKSYLLAVIGAEYIAQMLPKGTHDYARFIRPSELARFVREAGLQMVEIKGIAYHPLAKRFALSNDTDVNYLVACRRGA</sequence>
<accession>Q62M18</accession>